<proteinExistence type="inferred from homology"/>
<reference key="1">
    <citation type="journal article" date="2007" name="Proc. Natl. Acad. Sci. U.S.A.">
        <title>Genome sequencing reveals complex secondary metabolome in the marine actinomycete Salinispora tropica.</title>
        <authorList>
            <person name="Udwary D.W."/>
            <person name="Zeigler L."/>
            <person name="Asolkar R.N."/>
            <person name="Singan V."/>
            <person name="Lapidus A."/>
            <person name="Fenical W."/>
            <person name="Jensen P.R."/>
            <person name="Moore B.S."/>
        </authorList>
    </citation>
    <scope>NUCLEOTIDE SEQUENCE [LARGE SCALE GENOMIC DNA]</scope>
    <source>
        <strain>ATCC BAA-916 / DSM 44818 / JCM 13857 / NBRC 105044 / CNB-440</strain>
    </source>
</reference>
<protein>
    <recommendedName>
        <fullName evidence="1">Alanine racemase</fullName>
        <ecNumber evidence="1">5.1.1.1</ecNumber>
    </recommendedName>
</protein>
<name>ALR_SALTO</name>
<feature type="chain" id="PRO_1000085507" description="Alanine racemase">
    <location>
        <begin position="1"/>
        <end position="372"/>
    </location>
</feature>
<feature type="active site" description="Proton acceptor; specific for D-alanine" evidence="1">
    <location>
        <position position="33"/>
    </location>
</feature>
<feature type="active site" description="Proton acceptor; specific for L-alanine" evidence="1">
    <location>
        <position position="261"/>
    </location>
</feature>
<feature type="binding site" evidence="1">
    <location>
        <position position="131"/>
    </location>
    <ligand>
        <name>substrate</name>
    </ligand>
</feature>
<feature type="binding site" evidence="1">
    <location>
        <position position="309"/>
    </location>
    <ligand>
        <name>substrate</name>
    </ligand>
</feature>
<feature type="modified residue" description="N6-(pyridoxal phosphate)lysine" evidence="1">
    <location>
        <position position="33"/>
    </location>
</feature>
<keyword id="KW-0413">Isomerase</keyword>
<keyword id="KW-0663">Pyridoxal phosphate</keyword>
<keyword id="KW-1185">Reference proteome</keyword>
<evidence type="ECO:0000255" key="1">
    <source>
        <dbReference type="HAMAP-Rule" id="MF_01201"/>
    </source>
</evidence>
<accession>A4XBI0</accession>
<comment type="function">
    <text evidence="1">Catalyzes the interconversion of L-alanine and D-alanine. May also act on other amino acids.</text>
</comment>
<comment type="catalytic activity">
    <reaction evidence="1">
        <text>L-alanine = D-alanine</text>
        <dbReference type="Rhea" id="RHEA:20249"/>
        <dbReference type="ChEBI" id="CHEBI:57416"/>
        <dbReference type="ChEBI" id="CHEBI:57972"/>
        <dbReference type="EC" id="5.1.1.1"/>
    </reaction>
</comment>
<comment type="cofactor">
    <cofactor evidence="1">
        <name>pyridoxal 5'-phosphate</name>
        <dbReference type="ChEBI" id="CHEBI:597326"/>
    </cofactor>
</comment>
<comment type="pathway">
    <text evidence="1">Amino-acid biosynthesis; D-alanine biosynthesis; D-alanine from L-alanine: step 1/1.</text>
</comment>
<comment type="similarity">
    <text evidence="1">Belongs to the alanine racemase family.</text>
</comment>
<organism>
    <name type="scientific">Salinispora tropica (strain ATCC BAA-916 / DSM 44818 / JCM 13857 / NBRC 105044 / CNB-440)</name>
    <dbReference type="NCBI Taxonomy" id="369723"/>
    <lineage>
        <taxon>Bacteria</taxon>
        <taxon>Bacillati</taxon>
        <taxon>Actinomycetota</taxon>
        <taxon>Actinomycetes</taxon>
        <taxon>Micromonosporales</taxon>
        <taxon>Micromonosporaceae</taxon>
        <taxon>Salinispora</taxon>
    </lineage>
</organism>
<gene>
    <name type="primary">alr</name>
    <name type="ordered locus">Strop_3857</name>
</gene>
<dbReference type="EC" id="5.1.1.1" evidence="1"/>
<dbReference type="EMBL" id="CP000667">
    <property type="protein sequence ID" value="ABP56287.1"/>
    <property type="molecule type" value="Genomic_DNA"/>
</dbReference>
<dbReference type="RefSeq" id="WP_012015062.1">
    <property type="nucleotide sequence ID" value="NC_009380.1"/>
</dbReference>
<dbReference type="SMR" id="A4XBI0"/>
<dbReference type="STRING" id="369723.Strop_3857"/>
<dbReference type="KEGG" id="stp:Strop_3857"/>
<dbReference type="PATRIC" id="fig|369723.5.peg.3981"/>
<dbReference type="eggNOG" id="COG0787">
    <property type="taxonomic scope" value="Bacteria"/>
</dbReference>
<dbReference type="HOGENOM" id="CLU_028393_0_0_11"/>
<dbReference type="UniPathway" id="UPA00042">
    <property type="reaction ID" value="UER00497"/>
</dbReference>
<dbReference type="Proteomes" id="UP000000235">
    <property type="component" value="Chromosome"/>
</dbReference>
<dbReference type="GO" id="GO:0005829">
    <property type="term" value="C:cytosol"/>
    <property type="evidence" value="ECO:0007669"/>
    <property type="project" value="TreeGrafter"/>
</dbReference>
<dbReference type="GO" id="GO:0008784">
    <property type="term" value="F:alanine racemase activity"/>
    <property type="evidence" value="ECO:0007669"/>
    <property type="project" value="UniProtKB-UniRule"/>
</dbReference>
<dbReference type="GO" id="GO:0030170">
    <property type="term" value="F:pyridoxal phosphate binding"/>
    <property type="evidence" value="ECO:0007669"/>
    <property type="project" value="UniProtKB-UniRule"/>
</dbReference>
<dbReference type="GO" id="GO:0030632">
    <property type="term" value="P:D-alanine biosynthetic process"/>
    <property type="evidence" value="ECO:0007669"/>
    <property type="project" value="UniProtKB-UniRule"/>
</dbReference>
<dbReference type="GO" id="GO:0009252">
    <property type="term" value="P:peptidoglycan biosynthetic process"/>
    <property type="evidence" value="ECO:0007669"/>
    <property type="project" value="TreeGrafter"/>
</dbReference>
<dbReference type="CDD" id="cd00430">
    <property type="entry name" value="PLPDE_III_AR"/>
    <property type="match status" value="1"/>
</dbReference>
<dbReference type="FunFam" id="2.40.37.10:FF:000015">
    <property type="entry name" value="Alanine racemase"/>
    <property type="match status" value="1"/>
</dbReference>
<dbReference type="FunFam" id="3.20.20.10:FF:000002">
    <property type="entry name" value="Alanine racemase"/>
    <property type="match status" value="1"/>
</dbReference>
<dbReference type="Gene3D" id="3.20.20.10">
    <property type="entry name" value="Alanine racemase"/>
    <property type="match status" value="1"/>
</dbReference>
<dbReference type="Gene3D" id="2.40.37.10">
    <property type="entry name" value="Lyase, Ornithine Decarboxylase, Chain A, domain 1"/>
    <property type="match status" value="1"/>
</dbReference>
<dbReference type="HAMAP" id="MF_01201">
    <property type="entry name" value="Ala_racemase"/>
    <property type="match status" value="1"/>
</dbReference>
<dbReference type="InterPro" id="IPR000821">
    <property type="entry name" value="Ala_racemase"/>
</dbReference>
<dbReference type="InterPro" id="IPR009006">
    <property type="entry name" value="Ala_racemase/Decarboxylase_C"/>
</dbReference>
<dbReference type="InterPro" id="IPR011079">
    <property type="entry name" value="Ala_racemase_C"/>
</dbReference>
<dbReference type="InterPro" id="IPR001608">
    <property type="entry name" value="Ala_racemase_N"/>
</dbReference>
<dbReference type="InterPro" id="IPR020622">
    <property type="entry name" value="Ala_racemase_pyridoxalP-BS"/>
</dbReference>
<dbReference type="InterPro" id="IPR029066">
    <property type="entry name" value="PLP-binding_barrel"/>
</dbReference>
<dbReference type="NCBIfam" id="TIGR00492">
    <property type="entry name" value="alr"/>
    <property type="match status" value="1"/>
</dbReference>
<dbReference type="PANTHER" id="PTHR30511">
    <property type="entry name" value="ALANINE RACEMASE"/>
    <property type="match status" value="1"/>
</dbReference>
<dbReference type="PANTHER" id="PTHR30511:SF0">
    <property type="entry name" value="ALANINE RACEMASE, CATABOLIC-RELATED"/>
    <property type="match status" value="1"/>
</dbReference>
<dbReference type="Pfam" id="PF00842">
    <property type="entry name" value="Ala_racemase_C"/>
    <property type="match status" value="1"/>
</dbReference>
<dbReference type="Pfam" id="PF01168">
    <property type="entry name" value="Ala_racemase_N"/>
    <property type="match status" value="1"/>
</dbReference>
<dbReference type="PRINTS" id="PR00992">
    <property type="entry name" value="ALARACEMASE"/>
</dbReference>
<dbReference type="SMART" id="SM01005">
    <property type="entry name" value="Ala_racemase_C"/>
    <property type="match status" value="1"/>
</dbReference>
<dbReference type="SUPFAM" id="SSF50621">
    <property type="entry name" value="Alanine racemase C-terminal domain-like"/>
    <property type="match status" value="1"/>
</dbReference>
<dbReference type="SUPFAM" id="SSF51419">
    <property type="entry name" value="PLP-binding barrel"/>
    <property type="match status" value="1"/>
</dbReference>
<dbReference type="PROSITE" id="PS00395">
    <property type="entry name" value="ALANINE_RACEMASE"/>
    <property type="match status" value="1"/>
</dbReference>
<sequence>MWQAEVRVDLDAIRENVSWLRSGSAAELMAVVKGDGYGHGMVPAAHAALDGGADWLGVCTLDEALTLRRAGITVPVLAWLLAPGLPLHEGVTAGIDLGVASVAQLEEMVEAGRVAGRPARLHLKIDTGLSRGGATISEWPELLDAAAKAQADGAVEVVGVWSHFVYADAPGHPTTDRQLAVFHEGLGMVEKAGLRPRYRHLANSAATLTRPDAHFDLVRPGLAVYGLSPVAGERFGLRPAMTARARVMLTKQVPAGAGVSYGHTYTTDRASNLAVIPLGYADGVPRDASNSGPVQLGGVRRTISGRVCMDQFVLDCGDDPVAPGDVATLFGTGRDGEPTADDWAEAVGTINYEIVTRFGSTRVPRCYDGERP</sequence>